<name>PPAC_STAAC</name>
<gene>
    <name evidence="1" type="primary">ppaC</name>
    <name type="ordered locus">SACOL1982</name>
</gene>
<reference key="1">
    <citation type="journal article" date="2005" name="J. Bacteriol.">
        <title>Insights on evolution of virulence and resistance from the complete genome analysis of an early methicillin-resistant Staphylococcus aureus strain and a biofilm-producing methicillin-resistant Staphylococcus epidermidis strain.</title>
        <authorList>
            <person name="Gill S.R."/>
            <person name="Fouts D.E."/>
            <person name="Archer G.L."/>
            <person name="Mongodin E.F."/>
            <person name="DeBoy R.T."/>
            <person name="Ravel J."/>
            <person name="Paulsen I.T."/>
            <person name="Kolonay J.F."/>
            <person name="Brinkac L.M."/>
            <person name="Beanan M.J."/>
            <person name="Dodson R.J."/>
            <person name="Daugherty S.C."/>
            <person name="Madupu R."/>
            <person name="Angiuoli S.V."/>
            <person name="Durkin A.S."/>
            <person name="Haft D.H."/>
            <person name="Vamathevan J.J."/>
            <person name="Khouri H."/>
            <person name="Utterback T.R."/>
            <person name="Lee C."/>
            <person name="Dimitrov G."/>
            <person name="Jiang L."/>
            <person name="Qin H."/>
            <person name="Weidman J."/>
            <person name="Tran K."/>
            <person name="Kang K.H."/>
            <person name="Hance I.R."/>
            <person name="Nelson K.E."/>
            <person name="Fraser C.M."/>
        </authorList>
    </citation>
    <scope>NUCLEOTIDE SEQUENCE [LARGE SCALE GENOMIC DNA]</scope>
    <source>
        <strain>COL</strain>
    </source>
</reference>
<keyword id="KW-0963">Cytoplasm</keyword>
<keyword id="KW-0378">Hydrolase</keyword>
<keyword id="KW-0464">Manganese</keyword>
<keyword id="KW-0479">Metal-binding</keyword>
<protein>
    <recommendedName>
        <fullName evidence="1">Probable manganese-dependent inorganic pyrophosphatase</fullName>
        <ecNumber evidence="1">3.6.1.1</ecNumber>
    </recommendedName>
    <alternativeName>
        <fullName evidence="1">Pyrophosphate phospho-hydrolase</fullName>
        <shortName evidence="1">PPase</shortName>
    </alternativeName>
</protein>
<sequence length="309" mass="34069">MAKTYIFGHKNPDTDAISSAIIMAEFEQLRGNSGAKAYRLGDVSAETQFALDTFNVPAPELLTDDLDGQDVILVDHNEFQQSSDTIASATIKHVIDHHRIANFETAGPLCYRAEPVGCTATILYKMFRERGFEIKPEIAGLMLSAIISDSLLFKSPTCTQQDVKAAEELKDIAKVDIQKYGLDMLKAGASTTDKSVEFLLNMDAKSFTMGDYVTRIAQVNAVDLDEVLNRKEDLEKEMLAVSAQEKYDLFVLVVTDIINSDSKILVVGAEKDKVGEAFNVQLEDDMAFLSGVVSRKKQIVPQITEALTK</sequence>
<evidence type="ECO:0000255" key="1">
    <source>
        <dbReference type="HAMAP-Rule" id="MF_00207"/>
    </source>
</evidence>
<proteinExistence type="inferred from homology"/>
<organism>
    <name type="scientific">Staphylococcus aureus (strain COL)</name>
    <dbReference type="NCBI Taxonomy" id="93062"/>
    <lineage>
        <taxon>Bacteria</taxon>
        <taxon>Bacillati</taxon>
        <taxon>Bacillota</taxon>
        <taxon>Bacilli</taxon>
        <taxon>Bacillales</taxon>
        <taxon>Staphylococcaceae</taxon>
        <taxon>Staphylococcus</taxon>
    </lineage>
</organism>
<dbReference type="EC" id="3.6.1.1" evidence="1"/>
<dbReference type="EMBL" id="CP000046">
    <property type="protein sequence ID" value="AAW36952.1"/>
    <property type="molecule type" value="Genomic_DNA"/>
</dbReference>
<dbReference type="RefSeq" id="WP_001140871.1">
    <property type="nucleotide sequence ID" value="NZ_JBGOFO010000006.1"/>
</dbReference>
<dbReference type="SMR" id="Q5HEK1"/>
<dbReference type="KEGG" id="sac:SACOL1982"/>
<dbReference type="HOGENOM" id="CLU_025243_0_1_9"/>
<dbReference type="Proteomes" id="UP000000530">
    <property type="component" value="Chromosome"/>
</dbReference>
<dbReference type="GO" id="GO:0005737">
    <property type="term" value="C:cytoplasm"/>
    <property type="evidence" value="ECO:0007669"/>
    <property type="project" value="UniProtKB-SubCell"/>
</dbReference>
<dbReference type="GO" id="GO:0004427">
    <property type="term" value="F:inorganic diphosphate phosphatase activity"/>
    <property type="evidence" value="ECO:0007669"/>
    <property type="project" value="UniProtKB-UniRule"/>
</dbReference>
<dbReference type="GO" id="GO:0030145">
    <property type="term" value="F:manganese ion binding"/>
    <property type="evidence" value="ECO:0007669"/>
    <property type="project" value="UniProtKB-UniRule"/>
</dbReference>
<dbReference type="FunFam" id="3.10.310.20:FF:000001">
    <property type="entry name" value="Probable manganese-dependent inorganic pyrophosphatase"/>
    <property type="match status" value="1"/>
</dbReference>
<dbReference type="FunFam" id="3.90.1640.10:FF:000001">
    <property type="entry name" value="Probable manganese-dependent inorganic pyrophosphatase"/>
    <property type="match status" value="1"/>
</dbReference>
<dbReference type="Gene3D" id="3.10.310.20">
    <property type="entry name" value="DHHA2 domain"/>
    <property type="match status" value="1"/>
</dbReference>
<dbReference type="Gene3D" id="3.90.1640.10">
    <property type="entry name" value="inorganic pyrophosphatase (n-terminal core)"/>
    <property type="match status" value="1"/>
</dbReference>
<dbReference type="HAMAP" id="MF_00207">
    <property type="entry name" value="PPase_C"/>
    <property type="match status" value="1"/>
</dbReference>
<dbReference type="InterPro" id="IPR001667">
    <property type="entry name" value="DDH_dom"/>
</dbReference>
<dbReference type="InterPro" id="IPR038763">
    <property type="entry name" value="DHH_sf"/>
</dbReference>
<dbReference type="InterPro" id="IPR004097">
    <property type="entry name" value="DHHA2"/>
</dbReference>
<dbReference type="InterPro" id="IPR038222">
    <property type="entry name" value="DHHA2_dom_sf"/>
</dbReference>
<dbReference type="InterPro" id="IPR022934">
    <property type="entry name" value="Mn-dep_inorganic_PyrPase"/>
</dbReference>
<dbReference type="NCBIfam" id="NF003877">
    <property type="entry name" value="PRK05427.1"/>
    <property type="match status" value="1"/>
</dbReference>
<dbReference type="PANTHER" id="PTHR12112">
    <property type="entry name" value="BNIP - RELATED"/>
    <property type="match status" value="1"/>
</dbReference>
<dbReference type="PANTHER" id="PTHR12112:SF22">
    <property type="entry name" value="MANGANESE-DEPENDENT INORGANIC PYROPHOSPHATASE-RELATED"/>
    <property type="match status" value="1"/>
</dbReference>
<dbReference type="Pfam" id="PF01368">
    <property type="entry name" value="DHH"/>
    <property type="match status" value="1"/>
</dbReference>
<dbReference type="Pfam" id="PF02833">
    <property type="entry name" value="DHHA2"/>
    <property type="match status" value="1"/>
</dbReference>
<dbReference type="SMART" id="SM01131">
    <property type="entry name" value="DHHA2"/>
    <property type="match status" value="1"/>
</dbReference>
<dbReference type="SUPFAM" id="SSF64182">
    <property type="entry name" value="DHH phosphoesterases"/>
    <property type="match status" value="1"/>
</dbReference>
<feature type="chain" id="PRO_0000158579" description="Probable manganese-dependent inorganic pyrophosphatase">
    <location>
        <begin position="1"/>
        <end position="309"/>
    </location>
</feature>
<feature type="binding site" evidence="1">
    <location>
        <position position="9"/>
    </location>
    <ligand>
        <name>Mn(2+)</name>
        <dbReference type="ChEBI" id="CHEBI:29035"/>
        <label>1</label>
    </ligand>
</feature>
<feature type="binding site" evidence="1">
    <location>
        <position position="13"/>
    </location>
    <ligand>
        <name>Mn(2+)</name>
        <dbReference type="ChEBI" id="CHEBI:29035"/>
        <label>1</label>
    </ligand>
</feature>
<feature type="binding site" evidence="1">
    <location>
        <position position="15"/>
    </location>
    <ligand>
        <name>Mn(2+)</name>
        <dbReference type="ChEBI" id="CHEBI:29035"/>
        <label>2</label>
    </ligand>
</feature>
<feature type="binding site" evidence="1">
    <location>
        <position position="75"/>
    </location>
    <ligand>
        <name>Mn(2+)</name>
        <dbReference type="ChEBI" id="CHEBI:29035"/>
        <label>1</label>
    </ligand>
</feature>
<feature type="binding site" evidence="1">
    <location>
        <position position="75"/>
    </location>
    <ligand>
        <name>Mn(2+)</name>
        <dbReference type="ChEBI" id="CHEBI:29035"/>
        <label>2</label>
    </ligand>
</feature>
<feature type="binding site" evidence="1">
    <location>
        <position position="97"/>
    </location>
    <ligand>
        <name>Mn(2+)</name>
        <dbReference type="ChEBI" id="CHEBI:29035"/>
        <label>2</label>
    </ligand>
</feature>
<feature type="binding site" evidence="1">
    <location>
        <position position="149"/>
    </location>
    <ligand>
        <name>Mn(2+)</name>
        <dbReference type="ChEBI" id="CHEBI:29035"/>
        <label>2</label>
    </ligand>
</feature>
<comment type="catalytic activity">
    <reaction evidence="1">
        <text>diphosphate + H2O = 2 phosphate + H(+)</text>
        <dbReference type="Rhea" id="RHEA:24576"/>
        <dbReference type="ChEBI" id="CHEBI:15377"/>
        <dbReference type="ChEBI" id="CHEBI:15378"/>
        <dbReference type="ChEBI" id="CHEBI:33019"/>
        <dbReference type="ChEBI" id="CHEBI:43474"/>
        <dbReference type="EC" id="3.6.1.1"/>
    </reaction>
</comment>
<comment type="cofactor">
    <cofactor evidence="1">
        <name>Mn(2+)</name>
        <dbReference type="ChEBI" id="CHEBI:29035"/>
    </cofactor>
    <text evidence="1">Binds 2 manganese ions per subunit.</text>
</comment>
<comment type="subcellular location">
    <subcellularLocation>
        <location evidence="1">Cytoplasm</location>
    </subcellularLocation>
</comment>
<comment type="similarity">
    <text evidence="1">Belongs to the PPase class C family.</text>
</comment>
<accession>Q5HEK1</accession>